<comment type="subcellular location">
    <subcellularLocation>
        <location evidence="2">Cell membrane</location>
        <topology evidence="2">Lipid-anchor</topology>
    </subcellularLocation>
    <subcellularLocation>
        <location evidence="3">Membrane</location>
        <topology evidence="3">Multi-pass membrane protein</topology>
    </subcellularLocation>
</comment>
<comment type="similarity">
    <text evidence="3">Belongs to the YtcA family.</text>
</comment>
<feature type="signal peptide" evidence="2">
    <location>
        <begin position="1"/>
        <end position="26"/>
    </location>
</feature>
<feature type="chain" id="PRO_0000311869" description="Uncharacterized protein YtcA">
    <location>
        <begin position="27"/>
        <end position="91"/>
    </location>
</feature>
<feature type="transmembrane region" description="Helical" evidence="1">
    <location>
        <begin position="33"/>
        <end position="53"/>
    </location>
</feature>
<feature type="transmembrane region" description="Helical" evidence="1">
    <location>
        <begin position="70"/>
        <end position="90"/>
    </location>
</feature>
<feature type="lipid moiety-binding region" description="N-palmitoyl cysteine" evidence="2">
    <location>
        <position position="27"/>
    </location>
</feature>
<feature type="lipid moiety-binding region" description="S-diacylglycerol cysteine" evidence="2">
    <location>
        <position position="27"/>
    </location>
</feature>
<keyword id="KW-1003">Cell membrane</keyword>
<keyword id="KW-0449">Lipoprotein</keyword>
<keyword id="KW-0472">Membrane</keyword>
<keyword id="KW-0564">Palmitate</keyword>
<keyword id="KW-1185">Reference proteome</keyword>
<keyword id="KW-0732">Signal</keyword>
<keyword id="KW-0812">Transmembrane</keyword>
<keyword id="KW-1133">Transmembrane helix</keyword>
<dbReference type="EMBL" id="BA000007">
    <property type="protein sequence ID" value="BAB38488.1"/>
    <property type="molecule type" value="Genomic_DNA"/>
</dbReference>
<dbReference type="PIR" id="A91262">
    <property type="entry name" value="A91262"/>
</dbReference>
<dbReference type="RefSeq" id="NP_313092.1">
    <property type="nucleotide sequence ID" value="NC_002695.1"/>
</dbReference>
<dbReference type="RefSeq" id="WP_001301712.1">
    <property type="nucleotide sequence ID" value="NZ_VOAI01000008.1"/>
</dbReference>
<dbReference type="STRING" id="386585.gene:10368176"/>
<dbReference type="GeneID" id="916213"/>
<dbReference type="KEGG" id="ecs:ECs_5065"/>
<dbReference type="PATRIC" id="fig|386585.9.peg.5293"/>
<dbReference type="eggNOG" id="ENOG5033AJ8">
    <property type="taxonomic scope" value="Bacteria"/>
</dbReference>
<dbReference type="HOGENOM" id="CLU_157779_1_0_6"/>
<dbReference type="OMA" id="AFPGWFF"/>
<dbReference type="Proteomes" id="UP000000558">
    <property type="component" value="Chromosome"/>
</dbReference>
<dbReference type="GO" id="GO:0005886">
    <property type="term" value="C:plasma membrane"/>
    <property type="evidence" value="ECO:0007669"/>
    <property type="project" value="UniProtKB-SubCell"/>
</dbReference>
<dbReference type="InterPro" id="IPR031381">
    <property type="entry name" value="YtcA"/>
</dbReference>
<dbReference type="Pfam" id="PF17090">
    <property type="entry name" value="Ytca"/>
    <property type="match status" value="1"/>
</dbReference>
<dbReference type="PROSITE" id="PS51257">
    <property type="entry name" value="PROKAR_LIPOPROTEIN"/>
    <property type="match status" value="1"/>
</dbReference>
<proteinExistence type="inferred from homology"/>
<protein>
    <recommendedName>
        <fullName>Uncharacterized protein YtcA</fullName>
    </recommendedName>
</protein>
<accession>Q8X2V8</accession>
<evidence type="ECO:0000255" key="1"/>
<evidence type="ECO:0000255" key="2">
    <source>
        <dbReference type="PROSITE-ProRule" id="PRU00303"/>
    </source>
</evidence>
<evidence type="ECO:0000305" key="3"/>
<gene>
    <name type="primary">ytcA</name>
    <name type="ordered locus">ECs5065</name>
</gene>
<sequence length="91" mass="10271">MPTVLSRMAMQLKKTAWIIPVFMVSGCSLSPAIPVIGAYYPSWFFCAIASLILTLITRRVIQRANIKLAFVGIIYTALFALYAMLFWLAFF</sequence>
<name>YTCA_ECO57</name>
<organism>
    <name type="scientific">Escherichia coli O157:H7</name>
    <dbReference type="NCBI Taxonomy" id="83334"/>
    <lineage>
        <taxon>Bacteria</taxon>
        <taxon>Pseudomonadati</taxon>
        <taxon>Pseudomonadota</taxon>
        <taxon>Gammaproteobacteria</taxon>
        <taxon>Enterobacterales</taxon>
        <taxon>Enterobacteriaceae</taxon>
        <taxon>Escherichia</taxon>
    </lineage>
</organism>
<reference key="1">
    <citation type="journal article" date="2001" name="DNA Res.">
        <title>Complete genome sequence of enterohemorrhagic Escherichia coli O157:H7 and genomic comparison with a laboratory strain K-12.</title>
        <authorList>
            <person name="Hayashi T."/>
            <person name="Makino K."/>
            <person name="Ohnishi M."/>
            <person name="Kurokawa K."/>
            <person name="Ishii K."/>
            <person name="Yokoyama K."/>
            <person name="Han C.-G."/>
            <person name="Ohtsubo E."/>
            <person name="Nakayama K."/>
            <person name="Murata T."/>
            <person name="Tanaka M."/>
            <person name="Tobe T."/>
            <person name="Iida T."/>
            <person name="Takami H."/>
            <person name="Honda T."/>
            <person name="Sasakawa C."/>
            <person name="Ogasawara N."/>
            <person name="Yasunaga T."/>
            <person name="Kuhara S."/>
            <person name="Shiba T."/>
            <person name="Hattori M."/>
            <person name="Shinagawa H."/>
        </authorList>
    </citation>
    <scope>NUCLEOTIDE SEQUENCE [LARGE SCALE GENOMIC DNA]</scope>
    <source>
        <strain>O157:H7 / Sakai / RIMD 0509952 / EHEC</strain>
    </source>
</reference>